<proteinExistence type="inferred from homology"/>
<evidence type="ECO:0000255" key="1">
    <source>
        <dbReference type="HAMAP-Rule" id="MF_00658"/>
    </source>
</evidence>
<name>RLMH_METRJ</name>
<accession>B1M692</accession>
<feature type="chain" id="PRO_0000366622" description="Ribosomal RNA large subunit methyltransferase H">
    <location>
        <begin position="1"/>
        <end position="164"/>
    </location>
</feature>
<feature type="binding site" evidence="1">
    <location>
        <position position="109"/>
    </location>
    <ligand>
        <name>S-adenosyl-L-methionine</name>
        <dbReference type="ChEBI" id="CHEBI:59789"/>
    </ligand>
</feature>
<gene>
    <name evidence="1" type="primary">rlmH</name>
    <name type="ordered locus">Mrad2831_0100</name>
</gene>
<comment type="function">
    <text evidence="1">Specifically methylates the pseudouridine at position 1915 (m3Psi1915) in 23S rRNA.</text>
</comment>
<comment type="catalytic activity">
    <reaction evidence="1">
        <text>pseudouridine(1915) in 23S rRNA + S-adenosyl-L-methionine = N(3)-methylpseudouridine(1915) in 23S rRNA + S-adenosyl-L-homocysteine + H(+)</text>
        <dbReference type="Rhea" id="RHEA:42752"/>
        <dbReference type="Rhea" id="RHEA-COMP:10221"/>
        <dbReference type="Rhea" id="RHEA-COMP:10222"/>
        <dbReference type="ChEBI" id="CHEBI:15378"/>
        <dbReference type="ChEBI" id="CHEBI:57856"/>
        <dbReference type="ChEBI" id="CHEBI:59789"/>
        <dbReference type="ChEBI" id="CHEBI:65314"/>
        <dbReference type="ChEBI" id="CHEBI:74486"/>
        <dbReference type="EC" id="2.1.1.177"/>
    </reaction>
</comment>
<comment type="subunit">
    <text evidence="1">Homodimer.</text>
</comment>
<comment type="subcellular location">
    <subcellularLocation>
        <location evidence="1">Cytoplasm</location>
    </subcellularLocation>
</comment>
<comment type="similarity">
    <text evidence="1">Belongs to the RNA methyltransferase RlmH family.</text>
</comment>
<keyword id="KW-0963">Cytoplasm</keyword>
<keyword id="KW-0489">Methyltransferase</keyword>
<keyword id="KW-0698">rRNA processing</keyword>
<keyword id="KW-0949">S-adenosyl-L-methionine</keyword>
<keyword id="KW-0808">Transferase</keyword>
<sequence>MRLILAAVGRLKAGPERELASRYRDRAAQLGRGLGFPSCDNVEIPESRARRAPDRCAEEAAALATYLPSGGVLVAYDERGRADLGSEALAERVAGWRDAARPALVVTIGGPDGLDASIRTRAELILSFGAATLPHGLVRVLALEQLYRSLTILAGHPYHRGEAG</sequence>
<organism>
    <name type="scientific">Methylobacterium radiotolerans (strain ATCC 27329 / DSM 1819 / JCM 2831 / NBRC 15690 / NCIMB 10815 / 0-1)</name>
    <dbReference type="NCBI Taxonomy" id="426355"/>
    <lineage>
        <taxon>Bacteria</taxon>
        <taxon>Pseudomonadati</taxon>
        <taxon>Pseudomonadota</taxon>
        <taxon>Alphaproteobacteria</taxon>
        <taxon>Hyphomicrobiales</taxon>
        <taxon>Methylobacteriaceae</taxon>
        <taxon>Methylobacterium</taxon>
    </lineage>
</organism>
<reference key="1">
    <citation type="submission" date="2008-03" db="EMBL/GenBank/DDBJ databases">
        <title>Complete sequence of chromosome of Methylobacterium radiotolerans JCM 2831.</title>
        <authorList>
            <consortium name="US DOE Joint Genome Institute"/>
            <person name="Copeland A."/>
            <person name="Lucas S."/>
            <person name="Lapidus A."/>
            <person name="Glavina del Rio T."/>
            <person name="Dalin E."/>
            <person name="Tice H."/>
            <person name="Bruce D."/>
            <person name="Goodwin L."/>
            <person name="Pitluck S."/>
            <person name="Kiss H."/>
            <person name="Brettin T."/>
            <person name="Detter J.C."/>
            <person name="Han C."/>
            <person name="Kuske C.R."/>
            <person name="Schmutz J."/>
            <person name="Larimer F."/>
            <person name="Land M."/>
            <person name="Hauser L."/>
            <person name="Kyrpides N."/>
            <person name="Mikhailova N."/>
            <person name="Marx C.J."/>
            <person name="Richardson P."/>
        </authorList>
    </citation>
    <scope>NUCLEOTIDE SEQUENCE [LARGE SCALE GENOMIC DNA]</scope>
    <source>
        <strain>ATCC 27329 / DSM 1819 / JCM 2831 / NBRC 15690 / NCIMB 10815 / 0-1</strain>
    </source>
</reference>
<protein>
    <recommendedName>
        <fullName evidence="1">Ribosomal RNA large subunit methyltransferase H</fullName>
        <ecNumber evidence="1">2.1.1.177</ecNumber>
    </recommendedName>
    <alternativeName>
        <fullName evidence="1">23S rRNA (pseudouridine1915-N3)-methyltransferase</fullName>
    </alternativeName>
    <alternativeName>
        <fullName evidence="1">23S rRNA m3Psi1915 methyltransferase</fullName>
    </alternativeName>
    <alternativeName>
        <fullName evidence="1">rRNA (pseudouridine-N3-)-methyltransferase RlmH</fullName>
    </alternativeName>
</protein>
<dbReference type="EC" id="2.1.1.177" evidence="1"/>
<dbReference type="EMBL" id="CP001001">
    <property type="protein sequence ID" value="ACB22127.1"/>
    <property type="molecule type" value="Genomic_DNA"/>
</dbReference>
<dbReference type="RefSeq" id="WP_012317127.1">
    <property type="nucleotide sequence ID" value="NC_010505.1"/>
</dbReference>
<dbReference type="SMR" id="B1M692"/>
<dbReference type="STRING" id="426355.Mrad2831_0100"/>
<dbReference type="GeneID" id="6136400"/>
<dbReference type="KEGG" id="mrd:Mrad2831_0100"/>
<dbReference type="eggNOG" id="COG1576">
    <property type="taxonomic scope" value="Bacteria"/>
</dbReference>
<dbReference type="HOGENOM" id="CLU_100552_1_1_5"/>
<dbReference type="OrthoDB" id="9806643at2"/>
<dbReference type="Proteomes" id="UP000006589">
    <property type="component" value="Chromosome"/>
</dbReference>
<dbReference type="GO" id="GO:0005737">
    <property type="term" value="C:cytoplasm"/>
    <property type="evidence" value="ECO:0007669"/>
    <property type="project" value="UniProtKB-SubCell"/>
</dbReference>
<dbReference type="GO" id="GO:0070038">
    <property type="term" value="F:rRNA (pseudouridine-N3-)-methyltransferase activity"/>
    <property type="evidence" value="ECO:0007669"/>
    <property type="project" value="UniProtKB-UniRule"/>
</dbReference>
<dbReference type="CDD" id="cd18081">
    <property type="entry name" value="RlmH-like"/>
    <property type="match status" value="1"/>
</dbReference>
<dbReference type="Gene3D" id="3.40.1280.10">
    <property type="match status" value="1"/>
</dbReference>
<dbReference type="HAMAP" id="MF_00658">
    <property type="entry name" value="23SrRNA_methyltr_H"/>
    <property type="match status" value="1"/>
</dbReference>
<dbReference type="InterPro" id="IPR029028">
    <property type="entry name" value="Alpha/beta_knot_MTases"/>
</dbReference>
<dbReference type="InterPro" id="IPR003742">
    <property type="entry name" value="RlmH-like"/>
</dbReference>
<dbReference type="InterPro" id="IPR029026">
    <property type="entry name" value="tRNA_m1G_MTases_N"/>
</dbReference>
<dbReference type="NCBIfam" id="NF000989">
    <property type="entry name" value="PRK00103.2-3"/>
    <property type="match status" value="1"/>
</dbReference>
<dbReference type="NCBIfam" id="NF000991">
    <property type="entry name" value="PRK00103.2-5"/>
    <property type="match status" value="1"/>
</dbReference>
<dbReference type="PANTHER" id="PTHR33603">
    <property type="entry name" value="METHYLTRANSFERASE"/>
    <property type="match status" value="1"/>
</dbReference>
<dbReference type="PANTHER" id="PTHR33603:SF1">
    <property type="entry name" value="RIBOSOMAL RNA LARGE SUBUNIT METHYLTRANSFERASE H"/>
    <property type="match status" value="1"/>
</dbReference>
<dbReference type="Pfam" id="PF02590">
    <property type="entry name" value="SPOUT_MTase"/>
    <property type="match status" value="1"/>
</dbReference>
<dbReference type="PIRSF" id="PIRSF004505">
    <property type="entry name" value="MT_bac"/>
    <property type="match status" value="1"/>
</dbReference>
<dbReference type="SUPFAM" id="SSF75217">
    <property type="entry name" value="alpha/beta knot"/>
    <property type="match status" value="1"/>
</dbReference>